<evidence type="ECO:0000250" key="1"/>
<evidence type="ECO:0000255" key="2">
    <source>
        <dbReference type="PROSITE-ProRule" id="PRU00448"/>
    </source>
</evidence>
<evidence type="ECO:0000256" key="3">
    <source>
        <dbReference type="SAM" id="MobiDB-lite"/>
    </source>
</evidence>
<evidence type="ECO:0000305" key="4"/>
<reference key="1">
    <citation type="submission" date="2005-09" db="EMBL/GenBank/DDBJ databases">
        <title>Paramecium tetraurelia centrin-related protein genes.</title>
        <authorList>
            <person name="Klotz C."/>
        </authorList>
    </citation>
    <scope>NUCLEOTIDE SEQUENCE [GENOMIC DNA]</scope>
    <source>
        <strain>Stock d4-2</strain>
    </source>
</reference>
<reference key="2">
    <citation type="journal article" date="2006" name="Nature">
        <title>Global trends of whole-genome duplications revealed by the ciliate Paramecium tetraurelia.</title>
        <authorList>
            <person name="Aury J.-M."/>
            <person name="Jaillon O."/>
            <person name="Duret L."/>
            <person name="Noel B."/>
            <person name="Jubin C."/>
            <person name="Porcel B.M."/>
            <person name="Segurens B."/>
            <person name="Daubin V."/>
            <person name="Anthouard V."/>
            <person name="Aiach N."/>
            <person name="Arnaiz O."/>
            <person name="Billaut A."/>
            <person name="Beisson J."/>
            <person name="Blanc I."/>
            <person name="Bouhouche K."/>
            <person name="Camara F."/>
            <person name="Duharcourt S."/>
            <person name="Guigo R."/>
            <person name="Gogendeau D."/>
            <person name="Katinka M."/>
            <person name="Keller A.-M."/>
            <person name="Kissmehl R."/>
            <person name="Klotz C."/>
            <person name="Koll F."/>
            <person name="Le Mouel A."/>
            <person name="Lepere G."/>
            <person name="Malinsky S."/>
            <person name="Nowacki M."/>
            <person name="Nowak J.K."/>
            <person name="Plattner H."/>
            <person name="Poulain J."/>
            <person name="Ruiz F."/>
            <person name="Serrano V."/>
            <person name="Zagulski M."/>
            <person name="Dessen P."/>
            <person name="Betermier M."/>
            <person name="Weissenbach J."/>
            <person name="Scarpelli C."/>
            <person name="Schaechter V."/>
            <person name="Sperling L."/>
            <person name="Meyer E."/>
            <person name="Cohen J."/>
            <person name="Wincker P."/>
        </authorList>
    </citation>
    <scope>NUCLEOTIDE SEQUENCE [LARGE SCALE GENOMIC DNA]</scope>
    <source>
        <strain>Stock d4-2</strain>
    </source>
</reference>
<comment type="function">
    <text evidence="1">Plays a fundamental role in microtubule organizing center structure and function. Component of the infraciliary lattice (ICL) and the ciliary basal bodies (By similarity).</text>
</comment>
<comment type="subunit">
    <text evidence="1">Monomer.</text>
</comment>
<comment type="subcellular location">
    <subcellularLocation>
        <location evidence="1">Cytoplasm</location>
        <location evidence="1">Cytoskeleton</location>
    </subcellularLocation>
    <text evidence="1">ICL, innermost fibrous network of the cortical cytoskeleton.</text>
</comment>
<comment type="similarity">
    <text evidence="4">Belongs to the centrin family.</text>
</comment>
<dbReference type="EMBL" id="CR932084">
    <property type="protein sequence ID" value="CAI38924.1"/>
    <property type="molecule type" value="Genomic_DNA"/>
</dbReference>
<dbReference type="EMBL" id="CT868085">
    <property type="protein sequence ID" value="CAK70546.1"/>
    <property type="molecule type" value="Genomic_DNA"/>
</dbReference>
<dbReference type="RefSeq" id="XP_001437943.1">
    <property type="nucleotide sequence ID" value="XM_001437906.1"/>
</dbReference>
<dbReference type="SMR" id="Q3SEK0"/>
<dbReference type="STRING" id="5888.Q3SEK0"/>
<dbReference type="EnsemblProtists" id="CAK70546">
    <property type="protein sequence ID" value="CAK70546"/>
    <property type="gene ID" value="GSPATT00007681001"/>
</dbReference>
<dbReference type="GeneID" id="5023728"/>
<dbReference type="KEGG" id="ptm:GSPATT00007681001"/>
<dbReference type="eggNOG" id="KOG0028">
    <property type="taxonomic scope" value="Eukaryota"/>
</dbReference>
<dbReference type="HOGENOM" id="CLU_061288_18_2_1"/>
<dbReference type="InParanoid" id="Q3SEK0"/>
<dbReference type="OMA" id="EFMRMIK"/>
<dbReference type="OrthoDB" id="302480at2759"/>
<dbReference type="Proteomes" id="UP000000600">
    <property type="component" value="Partially assembled WGS sequence"/>
</dbReference>
<dbReference type="GO" id="GO:0005737">
    <property type="term" value="C:cytoplasm"/>
    <property type="evidence" value="ECO:0007669"/>
    <property type="project" value="UniProtKB-KW"/>
</dbReference>
<dbReference type="GO" id="GO:0005856">
    <property type="term" value="C:cytoskeleton"/>
    <property type="evidence" value="ECO:0007669"/>
    <property type="project" value="UniProtKB-SubCell"/>
</dbReference>
<dbReference type="GO" id="GO:0005509">
    <property type="term" value="F:calcium ion binding"/>
    <property type="evidence" value="ECO:0007669"/>
    <property type="project" value="InterPro"/>
</dbReference>
<dbReference type="CDD" id="cd00051">
    <property type="entry name" value="EFh"/>
    <property type="match status" value="2"/>
</dbReference>
<dbReference type="FunFam" id="1.10.238.10:FF:000178">
    <property type="entry name" value="Calmodulin-2 A"/>
    <property type="match status" value="1"/>
</dbReference>
<dbReference type="Gene3D" id="1.10.238.10">
    <property type="entry name" value="EF-hand"/>
    <property type="match status" value="2"/>
</dbReference>
<dbReference type="InterPro" id="IPR050230">
    <property type="entry name" value="CALM/Myosin/TropC-like"/>
</dbReference>
<dbReference type="InterPro" id="IPR011992">
    <property type="entry name" value="EF-hand-dom_pair"/>
</dbReference>
<dbReference type="InterPro" id="IPR002048">
    <property type="entry name" value="EF_hand_dom"/>
</dbReference>
<dbReference type="PANTHER" id="PTHR23048:SF59">
    <property type="entry name" value="EF-HAND SUPERFAMILY PROTEIN"/>
    <property type="match status" value="1"/>
</dbReference>
<dbReference type="PANTHER" id="PTHR23048">
    <property type="entry name" value="MYOSIN LIGHT CHAIN 1, 3"/>
    <property type="match status" value="1"/>
</dbReference>
<dbReference type="Pfam" id="PF13405">
    <property type="entry name" value="EF-hand_6"/>
    <property type="match status" value="1"/>
</dbReference>
<dbReference type="Pfam" id="PF13499">
    <property type="entry name" value="EF-hand_7"/>
    <property type="match status" value="1"/>
</dbReference>
<dbReference type="SMART" id="SM00054">
    <property type="entry name" value="EFh"/>
    <property type="match status" value="2"/>
</dbReference>
<dbReference type="SUPFAM" id="SSF47473">
    <property type="entry name" value="EF-hand"/>
    <property type="match status" value="1"/>
</dbReference>
<dbReference type="PROSITE" id="PS50222">
    <property type="entry name" value="EF_HAND_2"/>
    <property type="match status" value="3"/>
</dbReference>
<proteinExistence type="inferred from homology"/>
<protein>
    <recommendedName>
        <fullName>Caltractin ICL1e</fullName>
    </recommendedName>
    <alternativeName>
        <fullName>Centrin-5</fullName>
    </alternativeName>
</protein>
<gene>
    <name type="primary">Icl1e</name>
    <name type="ORF">GSPATT00007681001</name>
</gene>
<accession>Q3SEK0</accession>
<keyword id="KW-0106">Calcium</keyword>
<keyword id="KW-0963">Cytoplasm</keyword>
<keyword id="KW-0206">Cytoskeleton</keyword>
<keyword id="KW-0479">Metal-binding</keyword>
<keyword id="KW-1185">Reference proteome</keyword>
<keyword id="KW-0677">Repeat</keyword>
<organism>
    <name type="scientific">Paramecium tetraurelia</name>
    <dbReference type="NCBI Taxonomy" id="5888"/>
    <lineage>
        <taxon>Eukaryota</taxon>
        <taxon>Sar</taxon>
        <taxon>Alveolata</taxon>
        <taxon>Ciliophora</taxon>
        <taxon>Intramacronucleata</taxon>
        <taxon>Oligohymenophorea</taxon>
        <taxon>Peniculida</taxon>
        <taxon>Parameciidae</taxon>
        <taxon>Paramecium</taxon>
    </lineage>
</organism>
<name>CATR5_PARTE</name>
<sequence length="174" mass="19751">MSKKQQAPVAQKPVGKQQQVNRKPQDRPGLTEDEIEEIKEAFNLFDTEGTGRVDPRELKAAMQSLGFDQKNPTIFNMIAELENEGTDIDFDQFLDAITSKLGNRESRDGINKIFDLFDDDGSNSINLNNLKRVSKELGETMTAEELAEMLERAASNGRDISREDFYNIMVKRTF</sequence>
<feature type="chain" id="PRO_0000307826" description="Caltractin ICL1e">
    <location>
        <begin position="1"/>
        <end position="174"/>
    </location>
</feature>
<feature type="domain" description="EF-hand 1" evidence="2">
    <location>
        <begin position="33"/>
        <end position="68"/>
    </location>
</feature>
<feature type="domain" description="EF-hand 2" evidence="2">
    <location>
        <begin position="88"/>
        <end position="103"/>
    </location>
</feature>
<feature type="domain" description="EF-hand 3" evidence="2">
    <location>
        <begin position="105"/>
        <end position="140"/>
    </location>
</feature>
<feature type="domain" description="EF-hand 4" evidence="4">
    <location>
        <begin position="141"/>
        <end position="174"/>
    </location>
</feature>
<feature type="region of interest" description="Disordered" evidence="3">
    <location>
        <begin position="1"/>
        <end position="33"/>
    </location>
</feature>